<sequence length="95" mass="11191">MRNYEVMYIIKPEVEEEKVTALMEKFKSVVEEKGAEVTKLDKWGKRRLAYEINKIKEGIYVLMQFKAEPAASAELDRVMKINDDIVRHMIIREGE</sequence>
<gene>
    <name evidence="1" type="primary">rpsF</name>
    <name type="ordered locus">Dred_3308</name>
</gene>
<keyword id="KW-1185">Reference proteome</keyword>
<keyword id="KW-0687">Ribonucleoprotein</keyword>
<keyword id="KW-0689">Ribosomal protein</keyword>
<keyword id="KW-0694">RNA-binding</keyword>
<keyword id="KW-0699">rRNA-binding</keyword>
<name>RS6_DESRM</name>
<protein>
    <recommendedName>
        <fullName evidence="1">Small ribosomal subunit protein bS6</fullName>
    </recommendedName>
    <alternativeName>
        <fullName evidence="2">30S ribosomal protein S6</fullName>
    </alternativeName>
</protein>
<proteinExistence type="inferred from homology"/>
<evidence type="ECO:0000255" key="1">
    <source>
        <dbReference type="HAMAP-Rule" id="MF_00360"/>
    </source>
</evidence>
<evidence type="ECO:0000305" key="2"/>
<organism>
    <name type="scientific">Desulforamulus reducens (strain ATCC BAA-1160 / DSM 100696 / MI-1)</name>
    <name type="common">Desulfotomaculum reducens</name>
    <dbReference type="NCBI Taxonomy" id="349161"/>
    <lineage>
        <taxon>Bacteria</taxon>
        <taxon>Bacillati</taxon>
        <taxon>Bacillota</taxon>
        <taxon>Clostridia</taxon>
        <taxon>Eubacteriales</taxon>
        <taxon>Peptococcaceae</taxon>
        <taxon>Desulforamulus</taxon>
    </lineage>
</organism>
<feature type="chain" id="PRO_1000079442" description="Small ribosomal subunit protein bS6">
    <location>
        <begin position="1"/>
        <end position="95"/>
    </location>
</feature>
<comment type="function">
    <text evidence="1">Binds together with bS18 to 16S ribosomal RNA.</text>
</comment>
<comment type="similarity">
    <text evidence="1">Belongs to the bacterial ribosomal protein bS6 family.</text>
</comment>
<accession>A4J9Q5</accession>
<reference key="1">
    <citation type="submission" date="2007-03" db="EMBL/GenBank/DDBJ databases">
        <title>Complete sequence of Desulfotomaculum reducens MI-1.</title>
        <authorList>
            <consortium name="US DOE Joint Genome Institute"/>
            <person name="Copeland A."/>
            <person name="Lucas S."/>
            <person name="Lapidus A."/>
            <person name="Barry K."/>
            <person name="Detter J.C."/>
            <person name="Glavina del Rio T."/>
            <person name="Hammon N."/>
            <person name="Israni S."/>
            <person name="Dalin E."/>
            <person name="Tice H."/>
            <person name="Pitluck S."/>
            <person name="Sims D."/>
            <person name="Brettin T."/>
            <person name="Bruce D."/>
            <person name="Han C."/>
            <person name="Tapia R."/>
            <person name="Schmutz J."/>
            <person name="Larimer F."/>
            <person name="Land M."/>
            <person name="Hauser L."/>
            <person name="Kyrpides N."/>
            <person name="Kim E."/>
            <person name="Tebo B.M."/>
            <person name="Richardson P."/>
        </authorList>
    </citation>
    <scope>NUCLEOTIDE SEQUENCE [LARGE SCALE GENOMIC DNA]</scope>
    <source>
        <strain>ATCC BAA-1160 / DSM 100696 / MI-1</strain>
    </source>
</reference>
<dbReference type="EMBL" id="CP000612">
    <property type="protein sequence ID" value="ABO51808.1"/>
    <property type="molecule type" value="Genomic_DNA"/>
</dbReference>
<dbReference type="RefSeq" id="WP_011879593.1">
    <property type="nucleotide sequence ID" value="NC_009253.1"/>
</dbReference>
<dbReference type="SMR" id="A4J9Q5"/>
<dbReference type="STRING" id="349161.Dred_3308"/>
<dbReference type="KEGG" id="drm:Dred_3308"/>
<dbReference type="eggNOG" id="COG0360">
    <property type="taxonomic scope" value="Bacteria"/>
</dbReference>
<dbReference type="HOGENOM" id="CLU_113441_5_3_9"/>
<dbReference type="OrthoDB" id="9812702at2"/>
<dbReference type="Proteomes" id="UP000001556">
    <property type="component" value="Chromosome"/>
</dbReference>
<dbReference type="GO" id="GO:0005737">
    <property type="term" value="C:cytoplasm"/>
    <property type="evidence" value="ECO:0007669"/>
    <property type="project" value="UniProtKB-ARBA"/>
</dbReference>
<dbReference type="GO" id="GO:1990904">
    <property type="term" value="C:ribonucleoprotein complex"/>
    <property type="evidence" value="ECO:0007669"/>
    <property type="project" value="UniProtKB-KW"/>
</dbReference>
<dbReference type="GO" id="GO:0005840">
    <property type="term" value="C:ribosome"/>
    <property type="evidence" value="ECO:0007669"/>
    <property type="project" value="UniProtKB-KW"/>
</dbReference>
<dbReference type="GO" id="GO:0070181">
    <property type="term" value="F:small ribosomal subunit rRNA binding"/>
    <property type="evidence" value="ECO:0007669"/>
    <property type="project" value="TreeGrafter"/>
</dbReference>
<dbReference type="GO" id="GO:0003735">
    <property type="term" value="F:structural constituent of ribosome"/>
    <property type="evidence" value="ECO:0007669"/>
    <property type="project" value="InterPro"/>
</dbReference>
<dbReference type="GO" id="GO:0006412">
    <property type="term" value="P:translation"/>
    <property type="evidence" value="ECO:0007669"/>
    <property type="project" value="UniProtKB-UniRule"/>
</dbReference>
<dbReference type="CDD" id="cd00473">
    <property type="entry name" value="bS6"/>
    <property type="match status" value="1"/>
</dbReference>
<dbReference type="FunFam" id="3.30.70.60:FF:000002">
    <property type="entry name" value="30S ribosomal protein S6"/>
    <property type="match status" value="1"/>
</dbReference>
<dbReference type="Gene3D" id="3.30.70.60">
    <property type="match status" value="1"/>
</dbReference>
<dbReference type="HAMAP" id="MF_00360">
    <property type="entry name" value="Ribosomal_bS6"/>
    <property type="match status" value="1"/>
</dbReference>
<dbReference type="InterPro" id="IPR000529">
    <property type="entry name" value="Ribosomal_bS6"/>
</dbReference>
<dbReference type="InterPro" id="IPR020815">
    <property type="entry name" value="Ribosomal_bS6_CS"/>
</dbReference>
<dbReference type="InterPro" id="IPR035980">
    <property type="entry name" value="Ribosomal_bS6_sf"/>
</dbReference>
<dbReference type="InterPro" id="IPR020814">
    <property type="entry name" value="Ribosomal_S6_plastid/chlpt"/>
</dbReference>
<dbReference type="InterPro" id="IPR014717">
    <property type="entry name" value="Transl_elong_EF1B/ribsomal_bS6"/>
</dbReference>
<dbReference type="NCBIfam" id="TIGR00166">
    <property type="entry name" value="S6"/>
    <property type="match status" value="1"/>
</dbReference>
<dbReference type="PANTHER" id="PTHR21011">
    <property type="entry name" value="MITOCHONDRIAL 28S RIBOSOMAL PROTEIN S6"/>
    <property type="match status" value="1"/>
</dbReference>
<dbReference type="PANTHER" id="PTHR21011:SF1">
    <property type="entry name" value="SMALL RIBOSOMAL SUBUNIT PROTEIN BS6M"/>
    <property type="match status" value="1"/>
</dbReference>
<dbReference type="Pfam" id="PF01250">
    <property type="entry name" value="Ribosomal_S6"/>
    <property type="match status" value="1"/>
</dbReference>
<dbReference type="SUPFAM" id="SSF54995">
    <property type="entry name" value="Ribosomal protein S6"/>
    <property type="match status" value="1"/>
</dbReference>
<dbReference type="PROSITE" id="PS01048">
    <property type="entry name" value="RIBOSOMAL_S6"/>
    <property type="match status" value="1"/>
</dbReference>